<protein>
    <recommendedName>
        <fullName>NF-kappa-B inhibitor-interacting Ras-like protein</fullName>
        <shortName>Kappa B-Ras</shortName>
        <shortName>KappaB-Ras</shortName>
    </recommendedName>
</protein>
<evidence type="ECO:0000250" key="1"/>
<evidence type="ECO:0000269" key="2">
    <source>
    </source>
</evidence>
<evidence type="ECO:0000303" key="3">
    <source>
    </source>
</evidence>
<evidence type="ECO:0000305" key="4"/>
<reference key="1">
    <citation type="journal article" date="2000" name="Science">
        <title>A subclass of Ras proteins that regulate the degradation of IkappaB.</title>
        <authorList>
            <person name="Fenwick C."/>
            <person name="Na S.-Y."/>
            <person name="Voll R.E."/>
            <person name="Zhong H."/>
            <person name="Im S.-Y."/>
            <person name="Lee J.W."/>
            <person name="Ghosh S."/>
        </authorList>
    </citation>
    <scope>NUCLEOTIDE SEQUENCE [MRNA] (ISOFORM B)</scope>
    <scope>INTERACTION WITH CACT</scope>
</reference>
<reference key="2">
    <citation type="journal article" date="2000" name="Science">
        <title>The genome sequence of Drosophila melanogaster.</title>
        <authorList>
            <person name="Adams M.D."/>
            <person name="Celniker S.E."/>
            <person name="Holt R.A."/>
            <person name="Evans C.A."/>
            <person name="Gocayne J.D."/>
            <person name="Amanatides P.G."/>
            <person name="Scherer S.E."/>
            <person name="Li P.W."/>
            <person name="Hoskins R.A."/>
            <person name="Galle R.F."/>
            <person name="George R.A."/>
            <person name="Lewis S.E."/>
            <person name="Richards S."/>
            <person name="Ashburner M."/>
            <person name="Henderson S.N."/>
            <person name="Sutton G.G."/>
            <person name="Wortman J.R."/>
            <person name="Yandell M.D."/>
            <person name="Zhang Q."/>
            <person name="Chen L.X."/>
            <person name="Brandon R.C."/>
            <person name="Rogers Y.-H.C."/>
            <person name="Blazej R.G."/>
            <person name="Champe M."/>
            <person name="Pfeiffer B.D."/>
            <person name="Wan K.H."/>
            <person name="Doyle C."/>
            <person name="Baxter E.G."/>
            <person name="Helt G."/>
            <person name="Nelson C.R."/>
            <person name="Miklos G.L.G."/>
            <person name="Abril J.F."/>
            <person name="Agbayani A."/>
            <person name="An H.-J."/>
            <person name="Andrews-Pfannkoch C."/>
            <person name="Baldwin D."/>
            <person name="Ballew R.M."/>
            <person name="Basu A."/>
            <person name="Baxendale J."/>
            <person name="Bayraktaroglu L."/>
            <person name="Beasley E.M."/>
            <person name="Beeson K.Y."/>
            <person name="Benos P.V."/>
            <person name="Berman B.P."/>
            <person name="Bhandari D."/>
            <person name="Bolshakov S."/>
            <person name="Borkova D."/>
            <person name="Botchan M.R."/>
            <person name="Bouck J."/>
            <person name="Brokstein P."/>
            <person name="Brottier P."/>
            <person name="Burtis K.C."/>
            <person name="Busam D.A."/>
            <person name="Butler H."/>
            <person name="Cadieu E."/>
            <person name="Center A."/>
            <person name="Chandra I."/>
            <person name="Cherry J.M."/>
            <person name="Cawley S."/>
            <person name="Dahlke C."/>
            <person name="Davenport L.B."/>
            <person name="Davies P."/>
            <person name="de Pablos B."/>
            <person name="Delcher A."/>
            <person name="Deng Z."/>
            <person name="Mays A.D."/>
            <person name="Dew I."/>
            <person name="Dietz S.M."/>
            <person name="Dodson K."/>
            <person name="Doup L.E."/>
            <person name="Downes M."/>
            <person name="Dugan-Rocha S."/>
            <person name="Dunkov B.C."/>
            <person name="Dunn P."/>
            <person name="Durbin K.J."/>
            <person name="Evangelista C.C."/>
            <person name="Ferraz C."/>
            <person name="Ferriera S."/>
            <person name="Fleischmann W."/>
            <person name="Fosler C."/>
            <person name="Gabrielian A.E."/>
            <person name="Garg N.S."/>
            <person name="Gelbart W.M."/>
            <person name="Glasser K."/>
            <person name="Glodek A."/>
            <person name="Gong F."/>
            <person name="Gorrell J.H."/>
            <person name="Gu Z."/>
            <person name="Guan P."/>
            <person name="Harris M."/>
            <person name="Harris N.L."/>
            <person name="Harvey D.A."/>
            <person name="Heiman T.J."/>
            <person name="Hernandez J.R."/>
            <person name="Houck J."/>
            <person name="Hostin D."/>
            <person name="Houston K.A."/>
            <person name="Howland T.J."/>
            <person name="Wei M.-H."/>
            <person name="Ibegwam C."/>
            <person name="Jalali M."/>
            <person name="Kalush F."/>
            <person name="Karpen G.H."/>
            <person name="Ke Z."/>
            <person name="Kennison J.A."/>
            <person name="Ketchum K.A."/>
            <person name="Kimmel B.E."/>
            <person name="Kodira C.D."/>
            <person name="Kraft C.L."/>
            <person name="Kravitz S."/>
            <person name="Kulp D."/>
            <person name="Lai Z."/>
            <person name="Lasko P."/>
            <person name="Lei Y."/>
            <person name="Levitsky A.A."/>
            <person name="Li J.H."/>
            <person name="Li Z."/>
            <person name="Liang Y."/>
            <person name="Lin X."/>
            <person name="Liu X."/>
            <person name="Mattei B."/>
            <person name="McIntosh T.C."/>
            <person name="McLeod M.P."/>
            <person name="McPherson D."/>
            <person name="Merkulov G."/>
            <person name="Milshina N.V."/>
            <person name="Mobarry C."/>
            <person name="Morris J."/>
            <person name="Moshrefi A."/>
            <person name="Mount S.M."/>
            <person name="Moy M."/>
            <person name="Murphy B."/>
            <person name="Murphy L."/>
            <person name="Muzny D.M."/>
            <person name="Nelson D.L."/>
            <person name="Nelson D.R."/>
            <person name="Nelson K.A."/>
            <person name="Nixon K."/>
            <person name="Nusskern D.R."/>
            <person name="Pacleb J.M."/>
            <person name="Palazzolo M."/>
            <person name="Pittman G.S."/>
            <person name="Pan S."/>
            <person name="Pollard J."/>
            <person name="Puri V."/>
            <person name="Reese M.G."/>
            <person name="Reinert K."/>
            <person name="Remington K."/>
            <person name="Saunders R.D.C."/>
            <person name="Scheeler F."/>
            <person name="Shen H."/>
            <person name="Shue B.C."/>
            <person name="Siden-Kiamos I."/>
            <person name="Simpson M."/>
            <person name="Skupski M.P."/>
            <person name="Smith T.J."/>
            <person name="Spier E."/>
            <person name="Spradling A.C."/>
            <person name="Stapleton M."/>
            <person name="Strong R."/>
            <person name="Sun E."/>
            <person name="Svirskas R."/>
            <person name="Tector C."/>
            <person name="Turner R."/>
            <person name="Venter E."/>
            <person name="Wang A.H."/>
            <person name="Wang X."/>
            <person name="Wang Z.-Y."/>
            <person name="Wassarman D.A."/>
            <person name="Weinstock G.M."/>
            <person name="Weissenbach J."/>
            <person name="Williams S.M."/>
            <person name="Woodage T."/>
            <person name="Worley K.C."/>
            <person name="Wu D."/>
            <person name="Yang S."/>
            <person name="Yao Q.A."/>
            <person name="Ye J."/>
            <person name="Yeh R.-F."/>
            <person name="Zaveri J.S."/>
            <person name="Zhan M."/>
            <person name="Zhang G."/>
            <person name="Zhao Q."/>
            <person name="Zheng L."/>
            <person name="Zheng X.H."/>
            <person name="Zhong F.N."/>
            <person name="Zhong W."/>
            <person name="Zhou X."/>
            <person name="Zhu S.C."/>
            <person name="Zhu X."/>
            <person name="Smith H.O."/>
            <person name="Gibbs R.A."/>
            <person name="Myers E.W."/>
            <person name="Rubin G.M."/>
            <person name="Venter J.C."/>
        </authorList>
    </citation>
    <scope>NUCLEOTIDE SEQUENCE [LARGE SCALE GENOMIC DNA]</scope>
    <source>
        <strain>Berkeley</strain>
    </source>
</reference>
<reference key="3">
    <citation type="journal article" date="2002" name="Genome Biol.">
        <title>Annotation of the Drosophila melanogaster euchromatic genome: a systematic review.</title>
        <authorList>
            <person name="Misra S."/>
            <person name="Crosby M.A."/>
            <person name="Mungall C.J."/>
            <person name="Matthews B.B."/>
            <person name="Campbell K.S."/>
            <person name="Hradecky P."/>
            <person name="Huang Y."/>
            <person name="Kaminker J.S."/>
            <person name="Millburn G.H."/>
            <person name="Prochnik S.E."/>
            <person name="Smith C.D."/>
            <person name="Tupy J.L."/>
            <person name="Whitfield E.J."/>
            <person name="Bayraktaroglu L."/>
            <person name="Berman B.P."/>
            <person name="Bettencourt B.R."/>
            <person name="Celniker S.E."/>
            <person name="de Grey A.D.N.J."/>
            <person name="Drysdale R.A."/>
            <person name="Harris N.L."/>
            <person name="Richter J."/>
            <person name="Russo S."/>
            <person name="Schroeder A.J."/>
            <person name="Shu S.Q."/>
            <person name="Stapleton M."/>
            <person name="Yamada C."/>
            <person name="Ashburner M."/>
            <person name="Gelbart W.M."/>
            <person name="Rubin G.M."/>
            <person name="Lewis S.E."/>
        </authorList>
    </citation>
    <scope>GENOME REANNOTATION</scope>
    <source>
        <strain>Berkeley</strain>
    </source>
</reference>
<reference key="4">
    <citation type="journal article" date="2002" name="Genome Biol.">
        <title>A Drosophila full-length cDNA resource.</title>
        <authorList>
            <person name="Stapleton M."/>
            <person name="Carlson J.W."/>
            <person name="Brokstein P."/>
            <person name="Yu C."/>
            <person name="Champe M."/>
            <person name="George R.A."/>
            <person name="Guarin H."/>
            <person name="Kronmiller B."/>
            <person name="Pacleb J.M."/>
            <person name="Park S."/>
            <person name="Wan K.H."/>
            <person name="Rubin G.M."/>
            <person name="Celniker S.E."/>
        </authorList>
    </citation>
    <scope>NUCLEOTIDE SEQUENCE [LARGE SCALE MRNA] (ISOFORM A)</scope>
    <source>
        <strain>Berkeley</strain>
        <tissue>Embryo</tissue>
    </source>
</reference>
<reference key="5">
    <citation type="submission" date="2003-02" db="EMBL/GenBank/DDBJ databases">
        <authorList>
            <person name="Stapleton M."/>
            <person name="Brokstein P."/>
            <person name="Hong L."/>
            <person name="Agbayani A."/>
            <person name="Carlson J.W."/>
            <person name="Champe M."/>
            <person name="Chavez C."/>
            <person name="Dorsett V."/>
            <person name="Dresnek D."/>
            <person name="Farfan D."/>
            <person name="Frise E."/>
            <person name="George R.A."/>
            <person name="Gonzalez M."/>
            <person name="Guarin H."/>
            <person name="Kronmiller B."/>
            <person name="Li P.W."/>
            <person name="Liao G."/>
            <person name="Miranda A."/>
            <person name="Mungall C.J."/>
            <person name="Nunoo J."/>
            <person name="Pacleb J.M."/>
            <person name="Paragas V."/>
            <person name="Park S."/>
            <person name="Patel S."/>
            <person name="Phouanenavong S."/>
            <person name="Wan K.H."/>
            <person name="Yu C."/>
            <person name="Lewis S.E."/>
            <person name="Rubin G.M."/>
            <person name="Celniker S.E."/>
        </authorList>
    </citation>
    <scope>NUCLEOTIDE SEQUENCE [LARGE SCALE MRNA] (ISOFORM A)</scope>
    <source>
        <strain>Berkeley</strain>
        <tissue>Head</tissue>
    </source>
</reference>
<feature type="chain" id="PRO_0000225685" description="NF-kappa-B inhibitor-interacting Ras-like protein">
    <location>
        <begin position="1"/>
        <end position="201"/>
    </location>
</feature>
<feature type="region of interest" description="Small GTPase-like">
    <location>
        <begin position="3"/>
        <end position="201"/>
    </location>
</feature>
<feature type="short sequence motif" description="Effector region">
    <location>
        <begin position="40"/>
        <end position="48"/>
    </location>
</feature>
<feature type="binding site" evidence="1">
    <location>
        <begin position="16"/>
        <end position="23"/>
    </location>
    <ligand>
        <name>GTP</name>
        <dbReference type="ChEBI" id="CHEBI:37565"/>
    </ligand>
</feature>
<feature type="binding site" evidence="1">
    <location>
        <begin position="67"/>
        <end position="71"/>
    </location>
    <ligand>
        <name>GTP</name>
        <dbReference type="ChEBI" id="CHEBI:37565"/>
    </ligand>
</feature>
<feature type="binding site" evidence="1">
    <location>
        <begin position="127"/>
        <end position="130"/>
    </location>
    <ligand>
        <name>GTP</name>
        <dbReference type="ChEBI" id="CHEBI:37565"/>
    </ligand>
</feature>
<feature type="splice variant" id="VSP_017413" description="In isoform B." evidence="3">
    <original>T</original>
    <variation>TV</variation>
    <location>
        <position position="38"/>
    </location>
</feature>
<keyword id="KW-0025">Alternative splicing</keyword>
<keyword id="KW-0342">GTP-binding</keyword>
<keyword id="KW-0547">Nucleotide-binding</keyword>
<keyword id="KW-1185">Reference proteome</keyword>
<accession>Q9V4L4</accession>
<accession>Q86P69</accession>
<accession>Q9NH91</accession>
<sequence length="201" mass="22807">MLNAKIGKVGKVLVCGMKGVGKTALIEQLVYGHVNPETELHPTIEDIYVASVDTGRGGARETLRIYDTAGLQGEQQQLPRHYLQFPDAFVLVYDPMDPRSLDMLADIKADIEKHKEKKEIPVVVLANVRARAAPNPVEKVMDRANIWCQRERIKHYTVNAMERPSLYEPFTTLCARLHPMQTKSTFPQLRQVMQNRQKSEA</sequence>
<name>KBRAS_DROME</name>
<organism>
    <name type="scientific">Drosophila melanogaster</name>
    <name type="common">Fruit fly</name>
    <dbReference type="NCBI Taxonomy" id="7227"/>
    <lineage>
        <taxon>Eukaryota</taxon>
        <taxon>Metazoa</taxon>
        <taxon>Ecdysozoa</taxon>
        <taxon>Arthropoda</taxon>
        <taxon>Hexapoda</taxon>
        <taxon>Insecta</taxon>
        <taxon>Pterygota</taxon>
        <taxon>Neoptera</taxon>
        <taxon>Endopterygota</taxon>
        <taxon>Diptera</taxon>
        <taxon>Brachycera</taxon>
        <taxon>Muscomorpha</taxon>
        <taxon>Ephydroidea</taxon>
        <taxon>Drosophilidae</taxon>
        <taxon>Drosophila</taxon>
        <taxon>Sophophora</taxon>
    </lineage>
</organism>
<dbReference type="EMBL" id="AF229841">
    <property type="protein sequence ID" value="AAF35000.1"/>
    <property type="molecule type" value="mRNA"/>
</dbReference>
<dbReference type="EMBL" id="AE013599">
    <property type="protein sequence ID" value="AAF59256.1"/>
    <property type="molecule type" value="Genomic_DNA"/>
</dbReference>
<dbReference type="EMBL" id="AY061054">
    <property type="protein sequence ID" value="AAL28602.1"/>
    <property type="molecule type" value="mRNA"/>
</dbReference>
<dbReference type="EMBL" id="BT003452">
    <property type="protein sequence ID" value="AAO39455.1"/>
    <property type="status" value="ALT_INIT"/>
    <property type="molecule type" value="mRNA"/>
</dbReference>
<dbReference type="RefSeq" id="NP_001137613.1">
    <molecule id="Q9V4L4-1"/>
    <property type="nucleotide sequence ID" value="NM_001144141.3"/>
</dbReference>
<dbReference type="RefSeq" id="NP_001260770.1">
    <molecule id="Q9V4L4-1"/>
    <property type="nucleotide sequence ID" value="NM_001273841.1"/>
</dbReference>
<dbReference type="RefSeq" id="NP_610278.1">
    <molecule id="Q9V4L4-1"/>
    <property type="nucleotide sequence ID" value="NM_136434.5"/>
</dbReference>
<dbReference type="SMR" id="Q9V4L4"/>
<dbReference type="BioGRID" id="61546">
    <property type="interactions" value="1"/>
</dbReference>
<dbReference type="FunCoup" id="Q9V4L4">
    <property type="interactions" value="42"/>
</dbReference>
<dbReference type="IntAct" id="Q9V4L4">
    <property type="interactions" value="2"/>
</dbReference>
<dbReference type="STRING" id="7227.FBpp0088074"/>
<dbReference type="PaxDb" id="7227-FBpp0088074"/>
<dbReference type="DNASU" id="35667"/>
<dbReference type="EnsemblMetazoa" id="FBtr0089002">
    <molecule id="Q9V4L4-1"/>
    <property type="protein sequence ID" value="FBpp0088074"/>
    <property type="gene ID" value="FBgn0040513"/>
</dbReference>
<dbReference type="EnsemblMetazoa" id="FBtr0299801">
    <molecule id="Q9V4L4-1"/>
    <property type="protein sequence ID" value="FBpp0289079"/>
    <property type="gene ID" value="FBgn0040513"/>
</dbReference>
<dbReference type="EnsemblMetazoa" id="FBtr0336926">
    <molecule id="Q9V4L4-1"/>
    <property type="protein sequence ID" value="FBpp0307863"/>
    <property type="gene ID" value="FBgn0040513"/>
</dbReference>
<dbReference type="GeneID" id="35667"/>
<dbReference type="KEGG" id="dme:Dmel_CG1669"/>
<dbReference type="UCSC" id="CG1669-RA">
    <molecule id="Q9V4L4-1"/>
    <property type="organism name" value="d. melanogaster"/>
</dbReference>
<dbReference type="AGR" id="FB:FBgn0040513"/>
<dbReference type="CTD" id="35667"/>
<dbReference type="FlyBase" id="FBgn0040513">
    <property type="gene designation" value="kappaB-Ras"/>
</dbReference>
<dbReference type="VEuPathDB" id="VectorBase:FBgn0040513"/>
<dbReference type="eggNOG" id="KOG3883">
    <property type="taxonomic scope" value="Eukaryota"/>
</dbReference>
<dbReference type="GeneTree" id="ENSGT00940000168563"/>
<dbReference type="HOGENOM" id="CLU_041217_17_0_1"/>
<dbReference type="InParanoid" id="Q9V4L4"/>
<dbReference type="OMA" id="HRIGAEY"/>
<dbReference type="OrthoDB" id="10002389at2759"/>
<dbReference type="PhylomeDB" id="Q9V4L4"/>
<dbReference type="Reactome" id="R-DME-1810476">
    <property type="pathway name" value="RIP-mediated NFkB activation via ZBP1"/>
</dbReference>
<dbReference type="Reactome" id="R-DME-445989">
    <property type="pathway name" value="TAK1-dependent IKK and NF-kappa-B activation"/>
</dbReference>
<dbReference type="Reactome" id="R-DME-933542">
    <property type="pathway name" value="TRAF6 mediated NF-kB activation"/>
</dbReference>
<dbReference type="SignaLink" id="Q9V4L4"/>
<dbReference type="BioGRID-ORCS" id="35667">
    <property type="hits" value="0 hits in 3 CRISPR screens"/>
</dbReference>
<dbReference type="GenomeRNAi" id="35667"/>
<dbReference type="PRO" id="PR:Q9V4L4"/>
<dbReference type="Proteomes" id="UP000000803">
    <property type="component" value="Chromosome 2R"/>
</dbReference>
<dbReference type="Bgee" id="FBgn0040513">
    <property type="expression patterns" value="Expressed in saliva-secreting gland and 11 other cell types or tissues"/>
</dbReference>
<dbReference type="ExpressionAtlas" id="Q9V4L4">
    <property type="expression patterns" value="baseline"/>
</dbReference>
<dbReference type="GO" id="GO:0005525">
    <property type="term" value="F:GTP binding"/>
    <property type="evidence" value="ECO:0000255"/>
    <property type="project" value="FlyBase"/>
</dbReference>
<dbReference type="GO" id="GO:0032794">
    <property type="term" value="F:GTPase activating protein binding"/>
    <property type="evidence" value="ECO:0000318"/>
    <property type="project" value="GO_Central"/>
</dbReference>
<dbReference type="GO" id="GO:0106137">
    <property type="term" value="F:IkappaB kinase complex binding"/>
    <property type="evidence" value="ECO:0000353"/>
    <property type="project" value="FlyBase"/>
</dbReference>
<dbReference type="GO" id="GO:0043124">
    <property type="term" value="P:negative regulation of canonical NF-kappaB signal transduction"/>
    <property type="evidence" value="ECO:0007669"/>
    <property type="project" value="InterPro"/>
</dbReference>
<dbReference type="GO" id="GO:0032484">
    <property type="term" value="P:Ral protein signal transduction"/>
    <property type="evidence" value="ECO:0000318"/>
    <property type="project" value="GO_Central"/>
</dbReference>
<dbReference type="CDD" id="cd00882">
    <property type="entry name" value="Ras_like_GTPase"/>
    <property type="match status" value="1"/>
</dbReference>
<dbReference type="FunFam" id="3.40.50.300:FF:002473">
    <property type="entry name" value="KappaB-Ras, isoform B"/>
    <property type="match status" value="1"/>
</dbReference>
<dbReference type="Gene3D" id="3.40.50.300">
    <property type="entry name" value="P-loop containing nucleotide triphosphate hydrolases"/>
    <property type="match status" value="1"/>
</dbReference>
<dbReference type="InterPro" id="IPR042227">
    <property type="entry name" value="KBRS"/>
</dbReference>
<dbReference type="InterPro" id="IPR027417">
    <property type="entry name" value="P-loop_NTPase"/>
</dbReference>
<dbReference type="InterPro" id="IPR001806">
    <property type="entry name" value="Small_GTPase"/>
</dbReference>
<dbReference type="PANTHER" id="PTHR46152">
    <property type="entry name" value="NF-KAPPA-B INHIBITOR-INTERACTING RAS-LIKE PROTEIN"/>
    <property type="match status" value="1"/>
</dbReference>
<dbReference type="PANTHER" id="PTHR46152:SF3">
    <property type="entry name" value="NF-KAPPA-B INHIBITOR-INTERACTING RAS-LIKE PROTEIN"/>
    <property type="match status" value="1"/>
</dbReference>
<dbReference type="Pfam" id="PF00071">
    <property type="entry name" value="Ras"/>
    <property type="match status" value="1"/>
</dbReference>
<dbReference type="SMART" id="SM00173">
    <property type="entry name" value="RAS"/>
    <property type="match status" value="1"/>
</dbReference>
<dbReference type="SUPFAM" id="SSF52540">
    <property type="entry name" value="P-loop containing nucleoside triphosphate hydrolases"/>
    <property type="match status" value="1"/>
</dbReference>
<dbReference type="PROSITE" id="PS51419">
    <property type="entry name" value="RAB"/>
    <property type="match status" value="1"/>
</dbReference>
<comment type="function">
    <text evidence="1">Atypical Ras-like protein that may act as a regulator of NF-kappa-B activity, possibly by preventing the degradation of NF-kappa-B inhibitor cactus.</text>
</comment>
<comment type="subunit">
    <text evidence="2">Interacts with NF-kappa-B inhibitor cactus.</text>
</comment>
<comment type="alternative products">
    <event type="alternative splicing"/>
    <isoform>
        <id>Q9V4L4-1</id>
        <name>A</name>
        <sequence type="displayed"/>
    </isoform>
    <isoform>
        <id>Q9V4L4-2</id>
        <name>B</name>
        <sequence type="described" ref="VSP_017413"/>
    </isoform>
</comment>
<comment type="domain">
    <text>In contrast to other members of the Ras family, the members of the KappaB-Ras subfamily do not contain the conserved Gly and Gln residues in positions 18 and 71, which are replaced by Lys and Leu residues, respectively, and are therefore similar to the constitutively active forms of oncogenic forms of Ras. This suggests that members of this family are clearly different from other small GTPases proteins.</text>
</comment>
<comment type="similarity">
    <text evidence="4">Belongs to the small GTPase superfamily. Ras family. KappaB-Ras subfamily.</text>
</comment>
<comment type="sequence caution" evidence="4">
    <conflict type="erroneous initiation">
        <sequence resource="EMBL-CDS" id="AAO39455"/>
    </conflict>
</comment>
<gene>
    <name type="primary">kappaB-Ras</name>
    <name type="ORF">CG1669</name>
</gene>
<proteinExistence type="evidence at protein level"/>